<reference key="1">
    <citation type="submission" date="2003-01" db="EMBL/GenBank/DDBJ databases">
        <title>Chloroplast DNA phylogeny of tribe Heliantheae (Asteraceae).</title>
        <authorList>
            <person name="Panero J.L."/>
            <person name="Baldwin B.G."/>
            <person name="Schilling E.E."/>
            <person name="Clevinger J.A."/>
        </authorList>
    </citation>
    <scope>NUCLEOTIDE SEQUENCE [GENOMIC DNA]</scope>
</reference>
<geneLocation type="chloroplast"/>
<name>NDHI_BEBJU</name>
<dbReference type="EC" id="7.1.1.-" evidence="1"/>
<dbReference type="EMBL" id="AF383759">
    <property type="protein sequence ID" value="AAN61701.1"/>
    <property type="molecule type" value="Genomic_DNA"/>
</dbReference>
<dbReference type="SMR" id="Q8HVV3"/>
<dbReference type="GO" id="GO:0009535">
    <property type="term" value="C:chloroplast thylakoid membrane"/>
    <property type="evidence" value="ECO:0007669"/>
    <property type="project" value="UniProtKB-SubCell"/>
</dbReference>
<dbReference type="GO" id="GO:0051539">
    <property type="term" value="F:4 iron, 4 sulfur cluster binding"/>
    <property type="evidence" value="ECO:0007669"/>
    <property type="project" value="UniProtKB-KW"/>
</dbReference>
<dbReference type="GO" id="GO:0005506">
    <property type="term" value="F:iron ion binding"/>
    <property type="evidence" value="ECO:0007669"/>
    <property type="project" value="UniProtKB-UniRule"/>
</dbReference>
<dbReference type="GO" id="GO:0008137">
    <property type="term" value="F:NADH dehydrogenase (ubiquinone) activity"/>
    <property type="evidence" value="ECO:0007669"/>
    <property type="project" value="InterPro"/>
</dbReference>
<dbReference type="GO" id="GO:0048038">
    <property type="term" value="F:quinone binding"/>
    <property type="evidence" value="ECO:0007669"/>
    <property type="project" value="UniProtKB-KW"/>
</dbReference>
<dbReference type="GO" id="GO:0019684">
    <property type="term" value="P:photosynthesis, light reaction"/>
    <property type="evidence" value="ECO:0007669"/>
    <property type="project" value="UniProtKB-UniRule"/>
</dbReference>
<dbReference type="FunFam" id="3.30.70.3270:FF:000006">
    <property type="entry name" value="NAD(P)H-quinone oxidoreductase subunit I, chloroplastic"/>
    <property type="match status" value="1"/>
</dbReference>
<dbReference type="Gene3D" id="3.30.70.3270">
    <property type="match status" value="1"/>
</dbReference>
<dbReference type="HAMAP" id="MF_01351">
    <property type="entry name" value="NDH1_NuoI"/>
    <property type="match status" value="1"/>
</dbReference>
<dbReference type="InterPro" id="IPR017896">
    <property type="entry name" value="4Fe4S_Fe-S-bd"/>
</dbReference>
<dbReference type="InterPro" id="IPR017900">
    <property type="entry name" value="4Fe4S_Fe_S_CS"/>
</dbReference>
<dbReference type="InterPro" id="IPR010226">
    <property type="entry name" value="NADH_quinone_OxRdtase_chainI"/>
</dbReference>
<dbReference type="InterPro" id="IPR004497">
    <property type="entry name" value="NDHI"/>
</dbReference>
<dbReference type="NCBIfam" id="TIGR00403">
    <property type="entry name" value="ndhI"/>
    <property type="match status" value="1"/>
</dbReference>
<dbReference type="NCBIfam" id="TIGR01971">
    <property type="entry name" value="NuoI"/>
    <property type="match status" value="1"/>
</dbReference>
<dbReference type="NCBIfam" id="NF004537">
    <property type="entry name" value="PRK05888.1-3"/>
    <property type="match status" value="1"/>
</dbReference>
<dbReference type="PANTHER" id="PTHR47275">
    <property type="entry name" value="NAD(P)H-QUINONE OXIDOREDUCTASE SUBUNIT I, CHLOROPLASTIC"/>
    <property type="match status" value="1"/>
</dbReference>
<dbReference type="PANTHER" id="PTHR47275:SF1">
    <property type="entry name" value="NAD(P)H-QUINONE OXIDOREDUCTASE SUBUNIT I, CHLOROPLASTIC"/>
    <property type="match status" value="1"/>
</dbReference>
<dbReference type="Pfam" id="PF00037">
    <property type="entry name" value="Fer4"/>
    <property type="match status" value="2"/>
</dbReference>
<dbReference type="SUPFAM" id="SSF54862">
    <property type="entry name" value="4Fe-4S ferredoxins"/>
    <property type="match status" value="1"/>
</dbReference>
<dbReference type="PROSITE" id="PS00198">
    <property type="entry name" value="4FE4S_FER_1"/>
    <property type="match status" value="2"/>
</dbReference>
<dbReference type="PROSITE" id="PS51379">
    <property type="entry name" value="4FE4S_FER_2"/>
    <property type="match status" value="2"/>
</dbReference>
<protein>
    <recommendedName>
        <fullName evidence="1">NAD(P)H-quinone oxidoreductase subunit I, chloroplastic</fullName>
        <ecNumber evidence="1">7.1.1.-</ecNumber>
    </recommendedName>
    <alternativeName>
        <fullName evidence="1">NAD(P)H dehydrogenase subunit I</fullName>
        <shortName evidence="1">NDH subunit I</shortName>
    </alternativeName>
    <alternativeName>
        <fullName evidence="1">NADH-plastoquinone oxidoreductase subunit I</fullName>
    </alternativeName>
</protein>
<sequence>MFPMVTEFMNYGQQTVRAARYIGQGFMITLSHANRLPVTIQYPYEKLITSERFRGRIHFEFDKCIACEVCVRVCPIDLPVVDWKLETDIRKKRLLNYSIDFGICIFCGNCVEYCPTNCLSMTEEYELSTYDRHELNYNQIALGRLPMSIIDDYTIRTILNLPEIKT</sequence>
<organism>
    <name type="scientific">Bebbia juncea</name>
    <name type="common">Sweetbush</name>
    <name type="synonym">Carphephorus junceus</name>
    <dbReference type="NCBI Taxonomy" id="183007"/>
    <lineage>
        <taxon>Eukaryota</taxon>
        <taxon>Viridiplantae</taxon>
        <taxon>Streptophyta</taxon>
        <taxon>Embryophyta</taxon>
        <taxon>Tracheophyta</taxon>
        <taxon>Spermatophyta</taxon>
        <taxon>Magnoliopsida</taxon>
        <taxon>eudicotyledons</taxon>
        <taxon>Gunneridae</taxon>
        <taxon>Pentapetalae</taxon>
        <taxon>asterids</taxon>
        <taxon>campanulids</taxon>
        <taxon>Asterales</taxon>
        <taxon>Asteraceae</taxon>
        <taxon>Asteroideae</taxon>
        <taxon>Heliantheae alliance</taxon>
        <taxon>Millerieae</taxon>
        <taxon>Bebbia</taxon>
    </lineage>
</organism>
<evidence type="ECO:0000255" key="1">
    <source>
        <dbReference type="HAMAP-Rule" id="MF_01351"/>
    </source>
</evidence>
<proteinExistence type="inferred from homology"/>
<accession>Q8HVV3</accession>
<gene>
    <name evidence="1" type="primary">ndhI</name>
</gene>
<feature type="chain" id="PRO_0000250760" description="NAD(P)H-quinone oxidoreductase subunit I, chloroplastic">
    <location>
        <begin position="1"/>
        <end position="166"/>
    </location>
</feature>
<feature type="domain" description="4Fe-4S ferredoxin-type 1" evidence="1">
    <location>
        <begin position="55"/>
        <end position="84"/>
    </location>
</feature>
<feature type="domain" description="4Fe-4S ferredoxin-type 2" evidence="1">
    <location>
        <begin position="95"/>
        <end position="124"/>
    </location>
</feature>
<feature type="binding site" evidence="1">
    <location>
        <position position="64"/>
    </location>
    <ligand>
        <name>[4Fe-4S] cluster</name>
        <dbReference type="ChEBI" id="CHEBI:49883"/>
        <label>1</label>
    </ligand>
</feature>
<feature type="binding site" evidence="1">
    <location>
        <position position="67"/>
    </location>
    <ligand>
        <name>[4Fe-4S] cluster</name>
        <dbReference type="ChEBI" id="CHEBI:49883"/>
        <label>1</label>
    </ligand>
</feature>
<feature type="binding site" evidence="1">
    <location>
        <position position="70"/>
    </location>
    <ligand>
        <name>[4Fe-4S] cluster</name>
        <dbReference type="ChEBI" id="CHEBI:49883"/>
        <label>1</label>
    </ligand>
</feature>
<feature type="binding site" evidence="1">
    <location>
        <position position="74"/>
    </location>
    <ligand>
        <name>[4Fe-4S] cluster</name>
        <dbReference type="ChEBI" id="CHEBI:49883"/>
        <label>2</label>
    </ligand>
</feature>
<feature type="binding site" evidence="1">
    <location>
        <position position="104"/>
    </location>
    <ligand>
        <name>[4Fe-4S] cluster</name>
        <dbReference type="ChEBI" id="CHEBI:49883"/>
        <label>2</label>
    </ligand>
</feature>
<feature type="binding site" evidence="1">
    <location>
        <position position="107"/>
    </location>
    <ligand>
        <name>[4Fe-4S] cluster</name>
        <dbReference type="ChEBI" id="CHEBI:49883"/>
        <label>2</label>
    </ligand>
</feature>
<feature type="binding site" evidence="1">
    <location>
        <position position="110"/>
    </location>
    <ligand>
        <name>[4Fe-4S] cluster</name>
        <dbReference type="ChEBI" id="CHEBI:49883"/>
        <label>2</label>
    </ligand>
</feature>
<feature type="binding site" evidence="1">
    <location>
        <position position="114"/>
    </location>
    <ligand>
        <name>[4Fe-4S] cluster</name>
        <dbReference type="ChEBI" id="CHEBI:49883"/>
        <label>1</label>
    </ligand>
</feature>
<comment type="function">
    <text evidence="1">NDH shuttles electrons from NAD(P)H:plastoquinone, via FMN and iron-sulfur (Fe-S) centers, to quinones in the photosynthetic chain and possibly in a chloroplast respiratory chain. The immediate electron acceptor for the enzyme in this species is believed to be plastoquinone. Couples the redox reaction to proton translocation, and thus conserves the redox energy in a proton gradient.</text>
</comment>
<comment type="catalytic activity">
    <reaction evidence="1">
        <text>a plastoquinone + NADH + (n+1) H(+)(in) = a plastoquinol + NAD(+) + n H(+)(out)</text>
        <dbReference type="Rhea" id="RHEA:42608"/>
        <dbReference type="Rhea" id="RHEA-COMP:9561"/>
        <dbReference type="Rhea" id="RHEA-COMP:9562"/>
        <dbReference type="ChEBI" id="CHEBI:15378"/>
        <dbReference type="ChEBI" id="CHEBI:17757"/>
        <dbReference type="ChEBI" id="CHEBI:57540"/>
        <dbReference type="ChEBI" id="CHEBI:57945"/>
        <dbReference type="ChEBI" id="CHEBI:62192"/>
    </reaction>
</comment>
<comment type="catalytic activity">
    <reaction evidence="1">
        <text>a plastoquinone + NADPH + (n+1) H(+)(in) = a plastoquinol + NADP(+) + n H(+)(out)</text>
        <dbReference type="Rhea" id="RHEA:42612"/>
        <dbReference type="Rhea" id="RHEA-COMP:9561"/>
        <dbReference type="Rhea" id="RHEA-COMP:9562"/>
        <dbReference type="ChEBI" id="CHEBI:15378"/>
        <dbReference type="ChEBI" id="CHEBI:17757"/>
        <dbReference type="ChEBI" id="CHEBI:57783"/>
        <dbReference type="ChEBI" id="CHEBI:58349"/>
        <dbReference type="ChEBI" id="CHEBI:62192"/>
    </reaction>
</comment>
<comment type="cofactor">
    <cofactor evidence="1">
        <name>[4Fe-4S] cluster</name>
        <dbReference type="ChEBI" id="CHEBI:49883"/>
    </cofactor>
    <text evidence="1">Binds 2 [4Fe-4S] clusters per subunit.</text>
</comment>
<comment type="subunit">
    <text evidence="1">NDH is composed of at least 16 different subunits, 5 of which are encoded in the nucleus.</text>
</comment>
<comment type="subcellular location">
    <subcellularLocation>
        <location evidence="1">Plastid</location>
        <location evidence="1">Chloroplast thylakoid membrane</location>
        <topology evidence="1">Peripheral membrane protein</topology>
    </subcellularLocation>
</comment>
<comment type="similarity">
    <text evidence="1">Belongs to the complex I 23 kDa subunit family.</text>
</comment>
<keyword id="KW-0004">4Fe-4S</keyword>
<keyword id="KW-0150">Chloroplast</keyword>
<keyword id="KW-0408">Iron</keyword>
<keyword id="KW-0411">Iron-sulfur</keyword>
<keyword id="KW-0472">Membrane</keyword>
<keyword id="KW-0479">Metal-binding</keyword>
<keyword id="KW-0520">NAD</keyword>
<keyword id="KW-0521">NADP</keyword>
<keyword id="KW-0934">Plastid</keyword>
<keyword id="KW-0618">Plastoquinone</keyword>
<keyword id="KW-0874">Quinone</keyword>
<keyword id="KW-0677">Repeat</keyword>
<keyword id="KW-0793">Thylakoid</keyword>
<keyword id="KW-1278">Translocase</keyword>